<reference key="1">
    <citation type="journal article" date="2007" name="Genome Res.">
        <title>Genome characteristics of facultatively symbiotic Frankia sp. strains reflect host range and host plant biogeography.</title>
        <authorList>
            <person name="Normand P."/>
            <person name="Lapierre P."/>
            <person name="Tisa L.S."/>
            <person name="Gogarten J.P."/>
            <person name="Alloisio N."/>
            <person name="Bagnarol E."/>
            <person name="Bassi C.A."/>
            <person name="Berry A.M."/>
            <person name="Bickhart D.M."/>
            <person name="Choisne N."/>
            <person name="Couloux A."/>
            <person name="Cournoyer B."/>
            <person name="Cruveiller S."/>
            <person name="Daubin V."/>
            <person name="Demange N."/>
            <person name="Francino M.P."/>
            <person name="Goltsman E."/>
            <person name="Huang Y."/>
            <person name="Kopp O.R."/>
            <person name="Labarre L."/>
            <person name="Lapidus A."/>
            <person name="Lavire C."/>
            <person name="Marechal J."/>
            <person name="Martinez M."/>
            <person name="Mastronunzio J.E."/>
            <person name="Mullin B.C."/>
            <person name="Niemann J."/>
            <person name="Pujic P."/>
            <person name="Rawnsley T."/>
            <person name="Rouy Z."/>
            <person name="Schenowitz C."/>
            <person name="Sellstedt A."/>
            <person name="Tavares F."/>
            <person name="Tomkins J.P."/>
            <person name="Vallenet D."/>
            <person name="Valverde C."/>
            <person name="Wall L.G."/>
            <person name="Wang Y."/>
            <person name="Medigue C."/>
            <person name="Benson D.R."/>
        </authorList>
    </citation>
    <scope>NUCLEOTIDE SEQUENCE [LARGE SCALE GENOMIC DNA]</scope>
    <source>
        <strain>DSM 45818 / CECT 9043 / HFP020203 / CcI3</strain>
    </source>
</reference>
<organism>
    <name type="scientific">Frankia casuarinae (strain DSM 45818 / CECT 9043 / HFP020203 / CcI3)</name>
    <dbReference type="NCBI Taxonomy" id="106370"/>
    <lineage>
        <taxon>Bacteria</taxon>
        <taxon>Bacillati</taxon>
        <taxon>Actinomycetota</taxon>
        <taxon>Actinomycetes</taxon>
        <taxon>Frankiales</taxon>
        <taxon>Frankiaceae</taxon>
        <taxon>Frankia</taxon>
    </lineage>
</organism>
<gene>
    <name evidence="1" type="primary">argG</name>
    <name type="ordered locus">Francci3_3169</name>
</gene>
<keyword id="KW-0028">Amino-acid biosynthesis</keyword>
<keyword id="KW-0055">Arginine biosynthesis</keyword>
<keyword id="KW-0067">ATP-binding</keyword>
<keyword id="KW-0963">Cytoplasm</keyword>
<keyword id="KW-0436">Ligase</keyword>
<keyword id="KW-0547">Nucleotide-binding</keyword>
<keyword id="KW-1185">Reference proteome</keyword>
<proteinExistence type="inferred from homology"/>
<name>ASSY_FRACC</name>
<accession>Q2J866</accession>
<evidence type="ECO:0000255" key="1">
    <source>
        <dbReference type="HAMAP-Rule" id="MF_00005"/>
    </source>
</evidence>
<sequence length="400" mass="43040">MTERVVLAYSGGLDTSVAIGWIGAETGADVVALAVDVGQGGEDLEAIRQRALTCGAVESIVVDAREEFAESFVAPAIKSNALYMDRYPLISSLSRPVIVRHLVAAAREHGADAIAHGCTGKGNDQVRFEVGVAALAPGLSVLAPVRDSGMTRDKAIAFAEERGLPIDVSKKSPYSIDQNLWGRTAECGVLEDPWAQPPEDVFVYSADPTVARIPDEVTISFIDGVPVGLDGRSLPLADLVAELNVRAGAHGVGRIDLIEDRLVGIKSREIYECPAAITLLTAHRDLEDLTLERDVARFKRGIDQRWGEIVYDGLWYSPLKSALDAFVDSASAGVSGEVRIRLVGGVAQVVGRRSPASLYDHALATYDAGDQFDQRDARGFIELWGLPTKVWAAREQRLNP</sequence>
<dbReference type="EC" id="6.3.4.5" evidence="1"/>
<dbReference type="EMBL" id="CP000249">
    <property type="protein sequence ID" value="ABD12526.1"/>
    <property type="molecule type" value="Genomic_DNA"/>
</dbReference>
<dbReference type="RefSeq" id="WP_011437554.1">
    <property type="nucleotide sequence ID" value="NZ_LRTJ01000064.1"/>
</dbReference>
<dbReference type="SMR" id="Q2J866"/>
<dbReference type="STRING" id="106370.Francci3_3169"/>
<dbReference type="KEGG" id="fra:Francci3_3169"/>
<dbReference type="eggNOG" id="COG0137">
    <property type="taxonomic scope" value="Bacteria"/>
</dbReference>
<dbReference type="HOGENOM" id="CLU_032784_4_2_11"/>
<dbReference type="OrthoDB" id="9801641at2"/>
<dbReference type="PhylomeDB" id="Q2J866"/>
<dbReference type="UniPathway" id="UPA00068">
    <property type="reaction ID" value="UER00113"/>
</dbReference>
<dbReference type="Proteomes" id="UP000001937">
    <property type="component" value="Chromosome"/>
</dbReference>
<dbReference type="GO" id="GO:0005737">
    <property type="term" value="C:cytoplasm"/>
    <property type="evidence" value="ECO:0007669"/>
    <property type="project" value="UniProtKB-SubCell"/>
</dbReference>
<dbReference type="GO" id="GO:0004055">
    <property type="term" value="F:argininosuccinate synthase activity"/>
    <property type="evidence" value="ECO:0007669"/>
    <property type="project" value="UniProtKB-UniRule"/>
</dbReference>
<dbReference type="GO" id="GO:0005524">
    <property type="term" value="F:ATP binding"/>
    <property type="evidence" value="ECO:0007669"/>
    <property type="project" value="UniProtKB-UniRule"/>
</dbReference>
<dbReference type="GO" id="GO:0000053">
    <property type="term" value="P:argininosuccinate metabolic process"/>
    <property type="evidence" value="ECO:0007669"/>
    <property type="project" value="TreeGrafter"/>
</dbReference>
<dbReference type="GO" id="GO:0006526">
    <property type="term" value="P:L-arginine biosynthetic process"/>
    <property type="evidence" value="ECO:0007669"/>
    <property type="project" value="UniProtKB-UniRule"/>
</dbReference>
<dbReference type="GO" id="GO:0000050">
    <property type="term" value="P:urea cycle"/>
    <property type="evidence" value="ECO:0007669"/>
    <property type="project" value="TreeGrafter"/>
</dbReference>
<dbReference type="CDD" id="cd01999">
    <property type="entry name" value="ASS"/>
    <property type="match status" value="1"/>
</dbReference>
<dbReference type="FunFam" id="3.40.50.620:FF:000038">
    <property type="entry name" value="Argininosuccinate synthase"/>
    <property type="match status" value="1"/>
</dbReference>
<dbReference type="FunFam" id="3.90.1260.10:FF:000007">
    <property type="entry name" value="Argininosuccinate synthase"/>
    <property type="match status" value="1"/>
</dbReference>
<dbReference type="Gene3D" id="3.90.1260.10">
    <property type="entry name" value="Argininosuccinate synthetase, chain A, domain 2"/>
    <property type="match status" value="1"/>
</dbReference>
<dbReference type="Gene3D" id="3.40.50.620">
    <property type="entry name" value="HUPs"/>
    <property type="match status" value="1"/>
</dbReference>
<dbReference type="Gene3D" id="1.20.5.470">
    <property type="entry name" value="Single helix bin"/>
    <property type="match status" value="1"/>
</dbReference>
<dbReference type="HAMAP" id="MF_00005">
    <property type="entry name" value="Arg_succ_synth_type1"/>
    <property type="match status" value="1"/>
</dbReference>
<dbReference type="InterPro" id="IPR048268">
    <property type="entry name" value="Arginosuc_syn_C"/>
</dbReference>
<dbReference type="InterPro" id="IPR048267">
    <property type="entry name" value="Arginosuc_syn_N"/>
</dbReference>
<dbReference type="InterPro" id="IPR001518">
    <property type="entry name" value="Arginosuc_synth"/>
</dbReference>
<dbReference type="InterPro" id="IPR018223">
    <property type="entry name" value="Arginosuc_synth_CS"/>
</dbReference>
<dbReference type="InterPro" id="IPR023434">
    <property type="entry name" value="Arginosuc_synth_type_1_subfam"/>
</dbReference>
<dbReference type="InterPro" id="IPR024074">
    <property type="entry name" value="AS_cat/multimer_dom_body"/>
</dbReference>
<dbReference type="InterPro" id="IPR014729">
    <property type="entry name" value="Rossmann-like_a/b/a_fold"/>
</dbReference>
<dbReference type="NCBIfam" id="TIGR00032">
    <property type="entry name" value="argG"/>
    <property type="match status" value="1"/>
</dbReference>
<dbReference type="NCBIfam" id="NF001770">
    <property type="entry name" value="PRK00509.1"/>
    <property type="match status" value="1"/>
</dbReference>
<dbReference type="PANTHER" id="PTHR11587">
    <property type="entry name" value="ARGININOSUCCINATE SYNTHASE"/>
    <property type="match status" value="1"/>
</dbReference>
<dbReference type="PANTHER" id="PTHR11587:SF2">
    <property type="entry name" value="ARGININOSUCCINATE SYNTHASE"/>
    <property type="match status" value="1"/>
</dbReference>
<dbReference type="Pfam" id="PF20979">
    <property type="entry name" value="Arginosuc_syn_C"/>
    <property type="match status" value="1"/>
</dbReference>
<dbReference type="Pfam" id="PF00764">
    <property type="entry name" value="Arginosuc_synth"/>
    <property type="match status" value="1"/>
</dbReference>
<dbReference type="SUPFAM" id="SSF52402">
    <property type="entry name" value="Adenine nucleotide alpha hydrolases-like"/>
    <property type="match status" value="1"/>
</dbReference>
<dbReference type="SUPFAM" id="SSF69864">
    <property type="entry name" value="Argininosuccinate synthetase, C-terminal domain"/>
    <property type="match status" value="1"/>
</dbReference>
<dbReference type="PROSITE" id="PS00564">
    <property type="entry name" value="ARGININOSUCCIN_SYN_1"/>
    <property type="match status" value="1"/>
</dbReference>
<dbReference type="PROSITE" id="PS00565">
    <property type="entry name" value="ARGININOSUCCIN_SYN_2"/>
    <property type="match status" value="1"/>
</dbReference>
<comment type="catalytic activity">
    <reaction evidence="1">
        <text>L-citrulline + L-aspartate + ATP = 2-(N(omega)-L-arginino)succinate + AMP + diphosphate + H(+)</text>
        <dbReference type="Rhea" id="RHEA:10932"/>
        <dbReference type="ChEBI" id="CHEBI:15378"/>
        <dbReference type="ChEBI" id="CHEBI:29991"/>
        <dbReference type="ChEBI" id="CHEBI:30616"/>
        <dbReference type="ChEBI" id="CHEBI:33019"/>
        <dbReference type="ChEBI" id="CHEBI:57472"/>
        <dbReference type="ChEBI" id="CHEBI:57743"/>
        <dbReference type="ChEBI" id="CHEBI:456215"/>
        <dbReference type="EC" id="6.3.4.5"/>
    </reaction>
</comment>
<comment type="pathway">
    <text evidence="1">Amino-acid biosynthesis; L-arginine biosynthesis; L-arginine from L-ornithine and carbamoyl phosphate: step 2/3.</text>
</comment>
<comment type="subunit">
    <text evidence="1">Homotetramer.</text>
</comment>
<comment type="subcellular location">
    <subcellularLocation>
        <location evidence="1">Cytoplasm</location>
    </subcellularLocation>
</comment>
<comment type="similarity">
    <text evidence="1">Belongs to the argininosuccinate synthase family. Type 1 subfamily.</text>
</comment>
<feature type="chain" id="PRO_0000263927" description="Argininosuccinate synthase">
    <location>
        <begin position="1"/>
        <end position="400"/>
    </location>
</feature>
<feature type="binding site" evidence="1">
    <location>
        <begin position="8"/>
        <end position="16"/>
    </location>
    <ligand>
        <name>ATP</name>
        <dbReference type="ChEBI" id="CHEBI:30616"/>
    </ligand>
</feature>
<feature type="binding site" evidence="1">
    <location>
        <position position="87"/>
    </location>
    <ligand>
        <name>L-citrulline</name>
        <dbReference type="ChEBI" id="CHEBI:57743"/>
    </ligand>
</feature>
<feature type="binding site" evidence="1">
    <location>
        <position position="92"/>
    </location>
    <ligand>
        <name>L-citrulline</name>
        <dbReference type="ChEBI" id="CHEBI:57743"/>
    </ligand>
</feature>
<feature type="binding site" evidence="1">
    <location>
        <position position="117"/>
    </location>
    <ligand>
        <name>ATP</name>
        <dbReference type="ChEBI" id="CHEBI:30616"/>
    </ligand>
</feature>
<feature type="binding site" evidence="1">
    <location>
        <position position="119"/>
    </location>
    <ligand>
        <name>L-aspartate</name>
        <dbReference type="ChEBI" id="CHEBI:29991"/>
    </ligand>
</feature>
<feature type="binding site" evidence="1">
    <location>
        <position position="123"/>
    </location>
    <ligand>
        <name>L-aspartate</name>
        <dbReference type="ChEBI" id="CHEBI:29991"/>
    </ligand>
</feature>
<feature type="binding site" evidence="1">
    <location>
        <position position="123"/>
    </location>
    <ligand>
        <name>L-citrulline</name>
        <dbReference type="ChEBI" id="CHEBI:57743"/>
    </ligand>
</feature>
<feature type="binding site" evidence="1">
    <location>
        <position position="124"/>
    </location>
    <ligand>
        <name>L-aspartate</name>
        <dbReference type="ChEBI" id="CHEBI:29991"/>
    </ligand>
</feature>
<feature type="binding site" evidence="1">
    <location>
        <position position="127"/>
    </location>
    <ligand>
        <name>L-citrulline</name>
        <dbReference type="ChEBI" id="CHEBI:57743"/>
    </ligand>
</feature>
<feature type="binding site" evidence="1">
    <location>
        <position position="175"/>
    </location>
    <ligand>
        <name>L-citrulline</name>
        <dbReference type="ChEBI" id="CHEBI:57743"/>
    </ligand>
</feature>
<feature type="binding site" evidence="1">
    <location>
        <position position="259"/>
    </location>
    <ligand>
        <name>L-citrulline</name>
        <dbReference type="ChEBI" id="CHEBI:57743"/>
    </ligand>
</feature>
<feature type="binding site" evidence="1">
    <location>
        <position position="271"/>
    </location>
    <ligand>
        <name>L-citrulline</name>
        <dbReference type="ChEBI" id="CHEBI:57743"/>
    </ligand>
</feature>
<protein>
    <recommendedName>
        <fullName evidence="1">Argininosuccinate synthase</fullName>
        <ecNumber evidence="1">6.3.4.5</ecNumber>
    </recommendedName>
    <alternativeName>
        <fullName evidence="1">Citrulline--aspartate ligase</fullName>
    </alternativeName>
</protein>